<evidence type="ECO:0000255" key="1">
    <source>
        <dbReference type="HAMAP-Rule" id="MF_00102"/>
    </source>
</evidence>
<evidence type="ECO:0000305" key="2"/>
<protein>
    <recommendedName>
        <fullName evidence="1">4-hydroxy-tetrahydrodipicolinate reductase</fullName>
        <shortName evidence="1">HTPA reductase</shortName>
        <ecNumber evidence="1">1.17.1.8</ecNumber>
    </recommendedName>
</protein>
<reference key="1">
    <citation type="journal article" date="2003" name="Proc. Natl. Acad. Sci. U.S.A.">
        <title>The complete genome sequence of the carcinogenic bacterium Helicobacter hepaticus.</title>
        <authorList>
            <person name="Suerbaum S."/>
            <person name="Josenhans C."/>
            <person name="Sterzenbach T."/>
            <person name="Drescher B."/>
            <person name="Brandt P."/>
            <person name="Bell M."/>
            <person name="Droege M."/>
            <person name="Fartmann B."/>
            <person name="Fischer H.-P."/>
            <person name="Ge Z."/>
            <person name="Hoerster A."/>
            <person name="Holland R."/>
            <person name="Klein K."/>
            <person name="Koenig J."/>
            <person name="Macko L."/>
            <person name="Mendz G.L."/>
            <person name="Nyakatura G."/>
            <person name="Schauer D.B."/>
            <person name="Shen Z."/>
            <person name="Weber J."/>
            <person name="Frosch M."/>
            <person name="Fox J.G."/>
        </authorList>
    </citation>
    <scope>NUCLEOTIDE SEQUENCE [LARGE SCALE GENOMIC DNA]</scope>
    <source>
        <strain>ATCC 51449 / 3B1</strain>
    </source>
</reference>
<name>DAPB_HELHP</name>
<keyword id="KW-0028">Amino-acid biosynthesis</keyword>
<keyword id="KW-0963">Cytoplasm</keyword>
<keyword id="KW-0220">Diaminopimelate biosynthesis</keyword>
<keyword id="KW-0457">Lysine biosynthesis</keyword>
<keyword id="KW-0520">NAD</keyword>
<keyword id="KW-0521">NADP</keyword>
<keyword id="KW-0560">Oxidoreductase</keyword>
<keyword id="KW-1185">Reference proteome</keyword>
<proteinExistence type="inferred from homology"/>
<feature type="chain" id="PRO_0000141444" description="4-hydroxy-tetrahydrodipicolinate reductase">
    <location>
        <begin position="1"/>
        <end position="255"/>
    </location>
</feature>
<feature type="active site" description="Proton donor/acceptor" evidence="1">
    <location>
        <position position="144"/>
    </location>
</feature>
<feature type="active site" description="Proton donor" evidence="1">
    <location>
        <position position="148"/>
    </location>
</feature>
<feature type="binding site" evidence="1">
    <location>
        <begin position="8"/>
        <end position="13"/>
    </location>
    <ligand>
        <name>NAD(+)</name>
        <dbReference type="ChEBI" id="CHEBI:57540"/>
    </ligand>
</feature>
<feature type="binding site" evidence="1">
    <location>
        <begin position="88"/>
        <end position="90"/>
    </location>
    <ligand>
        <name>NAD(+)</name>
        <dbReference type="ChEBI" id="CHEBI:57540"/>
    </ligand>
</feature>
<feature type="binding site" evidence="1">
    <location>
        <begin position="112"/>
        <end position="115"/>
    </location>
    <ligand>
        <name>NAD(+)</name>
        <dbReference type="ChEBI" id="CHEBI:57540"/>
    </ligand>
</feature>
<feature type="binding site" evidence="1">
    <location>
        <position position="145"/>
    </location>
    <ligand>
        <name>(S)-2,3,4,5-tetrahydrodipicolinate</name>
        <dbReference type="ChEBI" id="CHEBI:16845"/>
    </ligand>
</feature>
<feature type="binding site" evidence="1">
    <location>
        <begin position="154"/>
        <end position="155"/>
    </location>
    <ligand>
        <name>(S)-2,3,4,5-tetrahydrodipicolinate</name>
        <dbReference type="ChEBI" id="CHEBI:16845"/>
    </ligand>
</feature>
<sequence length="255" mass="27838">MLKVGIFGATGRVGKLLIEEILNHTHFNLSSVYVRNELQYSLPSSTMVTKDFEIFLQASDVIIDFSSPEATKALLEVALSYPKPLVIGTTGLDNDIQHLLENASHTMPILYATNMSKGVAMLNKIGALVAATLKESDIEICEIHHRYKKDAPSGTALTLAQSCAKARNLKLSDVRISGRNGNIGERNSNEIGVMSLRGGDVAGRHTIGFYLDGEYLELTHNATSRLTFAKGALDMAKWIVTQKNGLYSIEDALEI</sequence>
<comment type="function">
    <text evidence="1">Catalyzes the conversion of 4-hydroxy-tetrahydrodipicolinate (HTPA) to tetrahydrodipicolinate.</text>
</comment>
<comment type="catalytic activity">
    <reaction evidence="1">
        <text>(S)-2,3,4,5-tetrahydrodipicolinate + NAD(+) + H2O = (2S,4S)-4-hydroxy-2,3,4,5-tetrahydrodipicolinate + NADH + H(+)</text>
        <dbReference type="Rhea" id="RHEA:35323"/>
        <dbReference type="ChEBI" id="CHEBI:15377"/>
        <dbReference type="ChEBI" id="CHEBI:15378"/>
        <dbReference type="ChEBI" id="CHEBI:16845"/>
        <dbReference type="ChEBI" id="CHEBI:57540"/>
        <dbReference type="ChEBI" id="CHEBI:57945"/>
        <dbReference type="ChEBI" id="CHEBI:67139"/>
        <dbReference type="EC" id="1.17.1.8"/>
    </reaction>
</comment>
<comment type="catalytic activity">
    <reaction evidence="1">
        <text>(S)-2,3,4,5-tetrahydrodipicolinate + NADP(+) + H2O = (2S,4S)-4-hydroxy-2,3,4,5-tetrahydrodipicolinate + NADPH + H(+)</text>
        <dbReference type="Rhea" id="RHEA:35331"/>
        <dbReference type="ChEBI" id="CHEBI:15377"/>
        <dbReference type="ChEBI" id="CHEBI:15378"/>
        <dbReference type="ChEBI" id="CHEBI:16845"/>
        <dbReference type="ChEBI" id="CHEBI:57783"/>
        <dbReference type="ChEBI" id="CHEBI:58349"/>
        <dbReference type="ChEBI" id="CHEBI:67139"/>
        <dbReference type="EC" id="1.17.1.8"/>
    </reaction>
</comment>
<comment type="pathway">
    <text evidence="1">Amino-acid biosynthesis; L-lysine biosynthesis via DAP pathway; (S)-tetrahydrodipicolinate from L-aspartate: step 4/4.</text>
</comment>
<comment type="subcellular location">
    <subcellularLocation>
        <location evidence="1">Cytoplasm</location>
    </subcellularLocation>
</comment>
<comment type="similarity">
    <text evidence="1">Belongs to the DapB family.</text>
</comment>
<comment type="caution">
    <text evidence="2">Was originally thought to be a dihydrodipicolinate reductase (DHDPR), catalyzing the conversion of dihydrodipicolinate to tetrahydrodipicolinate. However, it was shown in E.coli that the substrate of the enzymatic reaction is not dihydrodipicolinate (DHDP) but in fact (2S,4S)-4-hydroxy-2,3,4,5-tetrahydrodipicolinic acid (HTPA), the product released by the DapA-catalyzed reaction.</text>
</comment>
<organism>
    <name type="scientific">Helicobacter hepaticus (strain ATCC 51449 / 3B1)</name>
    <dbReference type="NCBI Taxonomy" id="235279"/>
    <lineage>
        <taxon>Bacteria</taxon>
        <taxon>Pseudomonadati</taxon>
        <taxon>Campylobacterota</taxon>
        <taxon>Epsilonproteobacteria</taxon>
        <taxon>Campylobacterales</taxon>
        <taxon>Helicobacteraceae</taxon>
        <taxon>Helicobacter</taxon>
    </lineage>
</organism>
<dbReference type="EC" id="1.17.1.8" evidence="1"/>
<dbReference type="EMBL" id="AE017125">
    <property type="protein sequence ID" value="AAP77084.1"/>
    <property type="molecule type" value="Genomic_DNA"/>
</dbReference>
<dbReference type="RefSeq" id="WP_011115329.1">
    <property type="nucleotide sequence ID" value="NC_004917.1"/>
</dbReference>
<dbReference type="SMR" id="Q7VIW7"/>
<dbReference type="STRING" id="235279.HH_0487"/>
<dbReference type="KEGG" id="hhe:HH_0487"/>
<dbReference type="eggNOG" id="COG0289">
    <property type="taxonomic scope" value="Bacteria"/>
</dbReference>
<dbReference type="HOGENOM" id="CLU_047479_2_2_7"/>
<dbReference type="OrthoDB" id="9790352at2"/>
<dbReference type="UniPathway" id="UPA00034">
    <property type="reaction ID" value="UER00018"/>
</dbReference>
<dbReference type="Proteomes" id="UP000002495">
    <property type="component" value="Chromosome"/>
</dbReference>
<dbReference type="GO" id="GO:0005829">
    <property type="term" value="C:cytosol"/>
    <property type="evidence" value="ECO:0007669"/>
    <property type="project" value="TreeGrafter"/>
</dbReference>
<dbReference type="GO" id="GO:0008839">
    <property type="term" value="F:4-hydroxy-tetrahydrodipicolinate reductase"/>
    <property type="evidence" value="ECO:0007669"/>
    <property type="project" value="UniProtKB-EC"/>
</dbReference>
<dbReference type="GO" id="GO:0051287">
    <property type="term" value="F:NAD binding"/>
    <property type="evidence" value="ECO:0007669"/>
    <property type="project" value="UniProtKB-UniRule"/>
</dbReference>
<dbReference type="GO" id="GO:0050661">
    <property type="term" value="F:NADP binding"/>
    <property type="evidence" value="ECO:0007669"/>
    <property type="project" value="UniProtKB-UniRule"/>
</dbReference>
<dbReference type="GO" id="GO:0016726">
    <property type="term" value="F:oxidoreductase activity, acting on CH or CH2 groups, NAD or NADP as acceptor"/>
    <property type="evidence" value="ECO:0007669"/>
    <property type="project" value="UniProtKB-UniRule"/>
</dbReference>
<dbReference type="GO" id="GO:0019877">
    <property type="term" value="P:diaminopimelate biosynthetic process"/>
    <property type="evidence" value="ECO:0007669"/>
    <property type="project" value="UniProtKB-UniRule"/>
</dbReference>
<dbReference type="GO" id="GO:0009089">
    <property type="term" value="P:lysine biosynthetic process via diaminopimelate"/>
    <property type="evidence" value="ECO:0007669"/>
    <property type="project" value="UniProtKB-UniRule"/>
</dbReference>
<dbReference type="CDD" id="cd02274">
    <property type="entry name" value="DHDPR_N"/>
    <property type="match status" value="1"/>
</dbReference>
<dbReference type="FunFam" id="3.30.360.10:FF:000004">
    <property type="entry name" value="4-hydroxy-tetrahydrodipicolinate reductase"/>
    <property type="match status" value="1"/>
</dbReference>
<dbReference type="Gene3D" id="3.30.360.10">
    <property type="entry name" value="Dihydrodipicolinate Reductase, domain 2"/>
    <property type="match status" value="1"/>
</dbReference>
<dbReference type="Gene3D" id="3.40.50.720">
    <property type="entry name" value="NAD(P)-binding Rossmann-like Domain"/>
    <property type="match status" value="1"/>
</dbReference>
<dbReference type="HAMAP" id="MF_00102">
    <property type="entry name" value="DapB"/>
    <property type="match status" value="1"/>
</dbReference>
<dbReference type="InterPro" id="IPR022663">
    <property type="entry name" value="DapB_C"/>
</dbReference>
<dbReference type="InterPro" id="IPR000846">
    <property type="entry name" value="DapB_N"/>
</dbReference>
<dbReference type="InterPro" id="IPR022664">
    <property type="entry name" value="DapB_N_CS"/>
</dbReference>
<dbReference type="InterPro" id="IPR023940">
    <property type="entry name" value="DHDPR_bac"/>
</dbReference>
<dbReference type="InterPro" id="IPR036291">
    <property type="entry name" value="NAD(P)-bd_dom_sf"/>
</dbReference>
<dbReference type="NCBIfam" id="TIGR00036">
    <property type="entry name" value="dapB"/>
    <property type="match status" value="1"/>
</dbReference>
<dbReference type="PANTHER" id="PTHR20836:SF0">
    <property type="entry name" value="4-HYDROXY-TETRAHYDRODIPICOLINATE REDUCTASE 1, CHLOROPLASTIC-RELATED"/>
    <property type="match status" value="1"/>
</dbReference>
<dbReference type="PANTHER" id="PTHR20836">
    <property type="entry name" value="DIHYDRODIPICOLINATE REDUCTASE"/>
    <property type="match status" value="1"/>
</dbReference>
<dbReference type="Pfam" id="PF05173">
    <property type="entry name" value="DapB_C"/>
    <property type="match status" value="1"/>
</dbReference>
<dbReference type="Pfam" id="PF01113">
    <property type="entry name" value="DapB_N"/>
    <property type="match status" value="1"/>
</dbReference>
<dbReference type="PIRSF" id="PIRSF000161">
    <property type="entry name" value="DHPR"/>
    <property type="match status" value="1"/>
</dbReference>
<dbReference type="SUPFAM" id="SSF55347">
    <property type="entry name" value="Glyceraldehyde-3-phosphate dehydrogenase-like, C-terminal domain"/>
    <property type="match status" value="1"/>
</dbReference>
<dbReference type="SUPFAM" id="SSF51735">
    <property type="entry name" value="NAD(P)-binding Rossmann-fold domains"/>
    <property type="match status" value="1"/>
</dbReference>
<dbReference type="PROSITE" id="PS01298">
    <property type="entry name" value="DAPB"/>
    <property type="match status" value="1"/>
</dbReference>
<gene>
    <name evidence="1" type="primary">dapB</name>
    <name type="ordered locus">HH_0487</name>
</gene>
<accession>Q7VIW7</accession>